<keyword id="KW-0274">FAD</keyword>
<keyword id="KW-0285">Flavoprotein</keyword>
<keyword id="KW-0472">Membrane</keyword>
<keyword id="KW-0496">Mitochondrion</keyword>
<keyword id="KW-1000">Mitochondrion outer membrane</keyword>
<keyword id="KW-0520">NAD</keyword>
<keyword id="KW-0560">Oxidoreductase</keyword>
<keyword id="KW-1185">Reference proteome</keyword>
<keyword id="KW-0812">Transmembrane</keyword>
<keyword id="KW-1133">Transmembrane helix</keyword>
<protein>
    <recommendedName>
        <fullName>NADH-cytochrome b5 reductase 2</fullName>
        <ecNumber>1.6.2.2</ecNumber>
    </recommendedName>
    <alternativeName>
        <fullName>Mitochondrial cytochrome b reductase</fullName>
    </alternativeName>
</protein>
<evidence type="ECO:0000250" key="1"/>
<evidence type="ECO:0000255" key="2"/>
<evidence type="ECO:0000255" key="3">
    <source>
        <dbReference type="PROSITE-ProRule" id="PRU00716"/>
    </source>
</evidence>
<evidence type="ECO:0000305" key="4"/>
<proteinExistence type="inferred from homology"/>
<feature type="chain" id="PRO_0000330178" description="NADH-cytochrome b5 reductase 2">
    <location>
        <begin position="1"/>
        <end position="348"/>
    </location>
</feature>
<feature type="transmembrane region" description="Helical" evidence="2">
    <location>
        <begin position="41"/>
        <end position="61"/>
    </location>
</feature>
<feature type="domain" description="FAD-binding FR-type" evidence="3">
    <location>
        <begin position="97"/>
        <end position="202"/>
    </location>
</feature>
<feature type="binding site" evidence="1">
    <location>
        <begin position="205"/>
        <end position="240"/>
    </location>
    <ligand>
        <name>FAD</name>
        <dbReference type="ChEBI" id="CHEBI:57692"/>
    </ligand>
</feature>
<organism>
    <name type="scientific">Chaetomium globosum (strain ATCC 6205 / CBS 148.51 / DSM 1962 / NBRC 6347 / NRRL 1970)</name>
    <name type="common">Soil fungus</name>
    <dbReference type="NCBI Taxonomy" id="306901"/>
    <lineage>
        <taxon>Eukaryota</taxon>
        <taxon>Fungi</taxon>
        <taxon>Dikarya</taxon>
        <taxon>Ascomycota</taxon>
        <taxon>Pezizomycotina</taxon>
        <taxon>Sordariomycetes</taxon>
        <taxon>Sordariomycetidae</taxon>
        <taxon>Sordariales</taxon>
        <taxon>Chaetomiaceae</taxon>
        <taxon>Chaetomium</taxon>
    </lineage>
</organism>
<sequence>MSLFVASRSAFRAAAPLKRQFQIRRYATEPPSADAKKGNNTLLYGAAAAAVAGAGYYFLGGTPAAKKAEEKVKDASSAAAGKLSTSEVKQALTGGEQGWVSLKLEEVEIVNHNSKRLRFRLPEDDMVSGVHVASAILTKFKPVDAEKPVIRPYTPTNDEDARGYLDLLVKKYPNGPMSTHLHDMVPGQRLDVKGPLPKYPWTANKHGHIALVAGGTGITPMFQLCRAIFNNPDDQTKVTLVFGNVREDDILLKKELAALENNNPRRFRAFYVLDDPPKHWTGGKGFITKDLLKTVLPEPKDENIKVFVCGPPGMMDAISGNKKSPKDQGELKGILKELGYSPEQVYKF</sequence>
<dbReference type="EC" id="1.6.2.2"/>
<dbReference type="EMBL" id="CH408029">
    <property type="protein sequence ID" value="EAQ92617.1"/>
    <property type="molecule type" value="Genomic_DNA"/>
</dbReference>
<dbReference type="RefSeq" id="XP_001220073.1">
    <property type="nucleotide sequence ID" value="XM_001220072.1"/>
</dbReference>
<dbReference type="SMR" id="Q2HG02"/>
<dbReference type="FunCoup" id="Q2HG02">
    <property type="interactions" value="282"/>
</dbReference>
<dbReference type="STRING" id="306901.Q2HG02"/>
<dbReference type="GeneID" id="4388100"/>
<dbReference type="VEuPathDB" id="FungiDB:CHGG_00852"/>
<dbReference type="eggNOG" id="KOG0534">
    <property type="taxonomic scope" value="Eukaryota"/>
</dbReference>
<dbReference type="HOGENOM" id="CLU_003827_9_1_1"/>
<dbReference type="InParanoid" id="Q2HG02"/>
<dbReference type="OMA" id="KGPEMQK"/>
<dbReference type="OrthoDB" id="432685at2759"/>
<dbReference type="Proteomes" id="UP000001056">
    <property type="component" value="Unassembled WGS sequence"/>
</dbReference>
<dbReference type="GO" id="GO:0005741">
    <property type="term" value="C:mitochondrial outer membrane"/>
    <property type="evidence" value="ECO:0007669"/>
    <property type="project" value="UniProtKB-SubCell"/>
</dbReference>
<dbReference type="GO" id="GO:0004128">
    <property type="term" value="F:cytochrome-b5 reductase activity, acting on NAD(P)H"/>
    <property type="evidence" value="ECO:0007669"/>
    <property type="project" value="UniProtKB-EC"/>
</dbReference>
<dbReference type="GO" id="GO:0006696">
    <property type="term" value="P:ergosterol biosynthetic process"/>
    <property type="evidence" value="ECO:0007669"/>
    <property type="project" value="TreeGrafter"/>
</dbReference>
<dbReference type="CDD" id="cd06183">
    <property type="entry name" value="cyt_b5_reduct_like"/>
    <property type="match status" value="1"/>
</dbReference>
<dbReference type="FunFam" id="2.40.30.10:FF:000032">
    <property type="entry name" value="NADH-cytochrome b5 reductase"/>
    <property type="match status" value="1"/>
</dbReference>
<dbReference type="FunFam" id="3.40.50.80:FF:000009">
    <property type="entry name" value="NADH-cytochrome b5 reductase"/>
    <property type="match status" value="1"/>
</dbReference>
<dbReference type="Gene3D" id="3.40.50.80">
    <property type="entry name" value="Nucleotide-binding domain of ferredoxin-NADP reductase (FNR) module"/>
    <property type="match status" value="1"/>
</dbReference>
<dbReference type="Gene3D" id="2.40.30.10">
    <property type="entry name" value="Translation factors"/>
    <property type="match status" value="1"/>
</dbReference>
<dbReference type="InterPro" id="IPR001834">
    <property type="entry name" value="CBR-like"/>
</dbReference>
<dbReference type="InterPro" id="IPR008333">
    <property type="entry name" value="Cbr1-like_FAD-bd_dom"/>
</dbReference>
<dbReference type="InterPro" id="IPR017927">
    <property type="entry name" value="FAD-bd_FR_type"/>
</dbReference>
<dbReference type="InterPro" id="IPR001709">
    <property type="entry name" value="Flavoprot_Pyr_Nucl_cyt_Rdtase"/>
</dbReference>
<dbReference type="InterPro" id="IPR039261">
    <property type="entry name" value="FNR_nucleotide-bd"/>
</dbReference>
<dbReference type="InterPro" id="IPR001433">
    <property type="entry name" value="OxRdtase_FAD/NAD-bd"/>
</dbReference>
<dbReference type="InterPro" id="IPR017938">
    <property type="entry name" value="Riboflavin_synthase-like_b-brl"/>
</dbReference>
<dbReference type="PANTHER" id="PTHR19370">
    <property type="entry name" value="NADH-CYTOCHROME B5 REDUCTASE"/>
    <property type="match status" value="1"/>
</dbReference>
<dbReference type="PANTHER" id="PTHR19370:SF171">
    <property type="entry name" value="NADH-CYTOCHROME B5 REDUCTASE 2"/>
    <property type="match status" value="1"/>
</dbReference>
<dbReference type="Pfam" id="PF00970">
    <property type="entry name" value="FAD_binding_6"/>
    <property type="match status" value="1"/>
</dbReference>
<dbReference type="Pfam" id="PF00175">
    <property type="entry name" value="NAD_binding_1"/>
    <property type="match status" value="1"/>
</dbReference>
<dbReference type="PRINTS" id="PR00406">
    <property type="entry name" value="CYTB5RDTASE"/>
</dbReference>
<dbReference type="PRINTS" id="PR00371">
    <property type="entry name" value="FPNCR"/>
</dbReference>
<dbReference type="SUPFAM" id="SSF52343">
    <property type="entry name" value="Ferredoxin reductase-like, C-terminal NADP-linked domain"/>
    <property type="match status" value="1"/>
</dbReference>
<dbReference type="SUPFAM" id="SSF63380">
    <property type="entry name" value="Riboflavin synthase domain-like"/>
    <property type="match status" value="1"/>
</dbReference>
<dbReference type="PROSITE" id="PS51384">
    <property type="entry name" value="FAD_FR"/>
    <property type="match status" value="1"/>
</dbReference>
<name>MCR1_CHAGB</name>
<accession>Q2HG02</accession>
<comment type="function">
    <text evidence="1">May mediate the reduction of outer membrane cytochrome b5.</text>
</comment>
<comment type="catalytic activity">
    <reaction>
        <text>2 Fe(III)-[cytochrome b5] + NADH = 2 Fe(II)-[cytochrome b5] + NAD(+) + H(+)</text>
        <dbReference type="Rhea" id="RHEA:46680"/>
        <dbReference type="Rhea" id="RHEA-COMP:10438"/>
        <dbReference type="Rhea" id="RHEA-COMP:10439"/>
        <dbReference type="ChEBI" id="CHEBI:15378"/>
        <dbReference type="ChEBI" id="CHEBI:29033"/>
        <dbReference type="ChEBI" id="CHEBI:29034"/>
        <dbReference type="ChEBI" id="CHEBI:57540"/>
        <dbReference type="ChEBI" id="CHEBI:57945"/>
        <dbReference type="EC" id="1.6.2.2"/>
    </reaction>
</comment>
<comment type="cofactor">
    <cofactor evidence="1">
        <name>FAD</name>
        <dbReference type="ChEBI" id="CHEBI:57692"/>
    </cofactor>
</comment>
<comment type="subcellular location">
    <subcellularLocation>
        <location evidence="1">Mitochondrion outer membrane</location>
        <topology evidence="1">Single-pass membrane protein</topology>
    </subcellularLocation>
</comment>
<comment type="similarity">
    <text evidence="4">Belongs to the flavoprotein pyridine nucleotide cytochrome reductase family.</text>
</comment>
<reference key="1">
    <citation type="journal article" date="2015" name="Genome Announc.">
        <title>Draft genome sequence of the cellulolytic fungus Chaetomium globosum.</title>
        <authorList>
            <person name="Cuomo C.A."/>
            <person name="Untereiner W.A."/>
            <person name="Ma L.-J."/>
            <person name="Grabherr M."/>
            <person name="Birren B.W."/>
        </authorList>
    </citation>
    <scope>NUCLEOTIDE SEQUENCE [LARGE SCALE GENOMIC DNA]</scope>
    <source>
        <strain>ATCC 6205 / CBS 148.51 / DSM 1962 / NBRC 6347 / NRRL 1970</strain>
    </source>
</reference>
<gene>
    <name type="primary">MCR1</name>
    <name type="ORF">CHGG_00852</name>
</gene>